<keyword id="KW-0997">Cell inner membrane</keyword>
<keyword id="KW-1003">Cell membrane</keyword>
<keyword id="KW-0407">Ion channel</keyword>
<keyword id="KW-0406">Ion transport</keyword>
<keyword id="KW-0472">Membrane</keyword>
<keyword id="KW-0812">Transmembrane</keyword>
<keyword id="KW-1133">Transmembrane helix</keyword>
<keyword id="KW-0813">Transport</keyword>
<proteinExistence type="inferred from homology"/>
<organism>
    <name type="scientific">Escherichia coli O6:K15:H31 (strain 536 / UPEC)</name>
    <dbReference type="NCBI Taxonomy" id="362663"/>
    <lineage>
        <taxon>Bacteria</taxon>
        <taxon>Pseudomonadati</taxon>
        <taxon>Pseudomonadota</taxon>
        <taxon>Gammaproteobacteria</taxon>
        <taxon>Enterobacterales</taxon>
        <taxon>Enterobacteriaceae</taxon>
        <taxon>Escherichia</taxon>
    </lineage>
</organism>
<dbReference type="EMBL" id="CP000247">
    <property type="protein sequence ID" value="ABG71358.1"/>
    <property type="molecule type" value="Genomic_DNA"/>
</dbReference>
<dbReference type="RefSeq" id="WP_000022450.1">
    <property type="nucleotide sequence ID" value="NC_008253.1"/>
</dbReference>
<dbReference type="SMR" id="Q0TCH1"/>
<dbReference type="KEGG" id="ecp:ECP_3378"/>
<dbReference type="HOGENOM" id="CLU_095787_0_0_6"/>
<dbReference type="Proteomes" id="UP000009182">
    <property type="component" value="Chromosome"/>
</dbReference>
<dbReference type="GO" id="GO:0005886">
    <property type="term" value="C:plasma membrane"/>
    <property type="evidence" value="ECO:0007669"/>
    <property type="project" value="UniProtKB-SubCell"/>
</dbReference>
<dbReference type="GO" id="GO:0008381">
    <property type="term" value="F:mechanosensitive monoatomic ion channel activity"/>
    <property type="evidence" value="ECO:0007669"/>
    <property type="project" value="UniProtKB-UniRule"/>
</dbReference>
<dbReference type="FunFam" id="1.10.1200.120:FF:000001">
    <property type="entry name" value="Large-conductance mechanosensitive channel"/>
    <property type="match status" value="1"/>
</dbReference>
<dbReference type="Gene3D" id="1.10.1200.120">
    <property type="entry name" value="Large-conductance mechanosensitive channel, MscL, domain 1"/>
    <property type="match status" value="1"/>
</dbReference>
<dbReference type="HAMAP" id="MF_00115">
    <property type="entry name" value="MscL"/>
    <property type="match status" value="1"/>
</dbReference>
<dbReference type="InterPro" id="IPR019823">
    <property type="entry name" value="Mechanosensitive_channel_CS"/>
</dbReference>
<dbReference type="InterPro" id="IPR001185">
    <property type="entry name" value="MS_channel"/>
</dbReference>
<dbReference type="InterPro" id="IPR037673">
    <property type="entry name" value="MSC/AndL"/>
</dbReference>
<dbReference type="InterPro" id="IPR036019">
    <property type="entry name" value="MscL_channel"/>
</dbReference>
<dbReference type="NCBIfam" id="TIGR00220">
    <property type="entry name" value="mscL"/>
    <property type="match status" value="1"/>
</dbReference>
<dbReference type="NCBIfam" id="NF001841">
    <property type="entry name" value="PRK00567.1-1"/>
    <property type="match status" value="1"/>
</dbReference>
<dbReference type="NCBIfam" id="NF001843">
    <property type="entry name" value="PRK00567.1-4"/>
    <property type="match status" value="1"/>
</dbReference>
<dbReference type="PANTHER" id="PTHR30266:SF2">
    <property type="entry name" value="LARGE-CONDUCTANCE MECHANOSENSITIVE CHANNEL"/>
    <property type="match status" value="1"/>
</dbReference>
<dbReference type="PANTHER" id="PTHR30266">
    <property type="entry name" value="MECHANOSENSITIVE CHANNEL MSCL"/>
    <property type="match status" value="1"/>
</dbReference>
<dbReference type="Pfam" id="PF01741">
    <property type="entry name" value="MscL"/>
    <property type="match status" value="1"/>
</dbReference>
<dbReference type="PRINTS" id="PR01264">
    <property type="entry name" value="MECHCHANNEL"/>
</dbReference>
<dbReference type="SUPFAM" id="SSF81330">
    <property type="entry name" value="Gated mechanosensitive channel"/>
    <property type="match status" value="1"/>
</dbReference>
<dbReference type="PROSITE" id="PS01327">
    <property type="entry name" value="MSCL"/>
    <property type="match status" value="1"/>
</dbReference>
<reference key="1">
    <citation type="journal article" date="2006" name="Mol. Microbiol.">
        <title>Role of pathogenicity island-associated integrases in the genome plasticity of uropathogenic Escherichia coli strain 536.</title>
        <authorList>
            <person name="Hochhut B."/>
            <person name="Wilde C."/>
            <person name="Balling G."/>
            <person name="Middendorf B."/>
            <person name="Dobrindt U."/>
            <person name="Brzuszkiewicz E."/>
            <person name="Gottschalk G."/>
            <person name="Carniel E."/>
            <person name="Hacker J."/>
        </authorList>
    </citation>
    <scope>NUCLEOTIDE SEQUENCE [LARGE SCALE GENOMIC DNA]</scope>
    <source>
        <strain>536 / UPEC</strain>
    </source>
</reference>
<comment type="function">
    <text evidence="1">Channel that opens in response to stretch forces in the membrane lipid bilayer. May participate in the regulation of osmotic pressure changes within the cell.</text>
</comment>
<comment type="subunit">
    <text evidence="1">Homopentamer.</text>
</comment>
<comment type="subcellular location">
    <subcellularLocation>
        <location evidence="1">Cell inner membrane</location>
        <topology evidence="1">Multi-pass membrane protein</topology>
    </subcellularLocation>
</comment>
<comment type="similarity">
    <text evidence="1">Belongs to the MscL family.</text>
</comment>
<sequence length="137" mass="15072">MSIIKEFREFAMRGNVVDLAVGVIIGAAFGKIVSSLVADIIMPPLGLLIGGIDFKQFAVTLREAQGDIPAVVMHYGVFIQNVFDFLIVAFAIFMAIKLINKLNRKKEEPAAATPAPTKEEVLLTEIRDLLKEQNNRS</sequence>
<feature type="chain" id="PRO_1000015377" description="Large-conductance mechanosensitive channel">
    <location>
        <begin position="1"/>
        <end position="137"/>
    </location>
</feature>
<feature type="transmembrane region" description="Helical" evidence="1">
    <location>
        <begin position="10"/>
        <end position="30"/>
    </location>
</feature>
<feature type="transmembrane region" description="Helical" evidence="1">
    <location>
        <begin position="76"/>
        <end position="96"/>
    </location>
</feature>
<protein>
    <recommendedName>
        <fullName evidence="1">Large-conductance mechanosensitive channel</fullName>
    </recommendedName>
</protein>
<evidence type="ECO:0000255" key="1">
    <source>
        <dbReference type="HAMAP-Rule" id="MF_00115"/>
    </source>
</evidence>
<accession>Q0TCH1</accession>
<gene>
    <name evidence="1" type="primary">mscL</name>
    <name type="ordered locus">ECP_3378</name>
</gene>
<name>MSCL_ECOL5</name>